<accession>A5DB51</accession>
<accession>Q8X181</accession>
<evidence type="ECO:0000250" key="1"/>
<evidence type="ECO:0000250" key="2">
    <source>
        <dbReference type="UniProtKB" id="P0AFU8"/>
    </source>
</evidence>
<evidence type="ECO:0000250" key="3">
    <source>
        <dbReference type="UniProtKB" id="Q2YN92"/>
    </source>
</evidence>
<evidence type="ECO:0000250" key="4">
    <source>
        <dbReference type="UniProtKB" id="Q9Y7P0"/>
    </source>
</evidence>
<evidence type="ECO:0000269" key="5">
    <source>
    </source>
</evidence>
<evidence type="ECO:0000305" key="6"/>
<name>RISA_PICGU</name>
<protein>
    <recommendedName>
        <fullName>Riboflavin synthase</fullName>
        <shortName>RS</shortName>
        <ecNumber>2.5.1.9</ecNumber>
    </recommendedName>
</protein>
<keyword id="KW-1185">Reference proteome</keyword>
<keyword id="KW-0677">Repeat</keyword>
<keyword id="KW-0686">Riboflavin biosynthesis</keyword>
<keyword id="KW-0808">Transferase</keyword>
<proteinExistence type="evidence at transcript level"/>
<sequence>MFTGLVEHIGTVLQVTEKDTTASGGDGVSMVIGDCSKILEDVQLGDSICTNGVCLTVTEFDMARSQFKVGISPETLRRSDLGELKPGSKVNLERAVKADVRMGGHVVQGHVDTIATIVNRRGDGNAINFTFKLRDSQYGKYIVEKGFIAIDGTSLTVTDVDHEQSEFSISMVSYTQEKVIMPLKNSGDSVNIEVDLTGKLIEKQIELSLLSYIKDETSPLSTLIGKLVEKKVDDVLKRN</sequence>
<dbReference type="EC" id="2.5.1.9"/>
<dbReference type="EMBL" id="AF459790">
    <property type="protein sequence ID" value="AAL66353.2"/>
    <property type="molecule type" value="Genomic_DNA"/>
</dbReference>
<dbReference type="EMBL" id="AY138984">
    <property type="protein sequence ID" value="AAN08875.2"/>
    <property type="molecule type" value="Genomic_DNA"/>
</dbReference>
<dbReference type="EMBL" id="CH408155">
    <property type="protein sequence ID" value="EDK36408.2"/>
    <property type="status" value="ALT_INIT"/>
    <property type="molecule type" value="Genomic_DNA"/>
</dbReference>
<dbReference type="RefSeq" id="XP_001487129.1">
    <property type="nucleotide sequence ID" value="XM_001487079.1"/>
</dbReference>
<dbReference type="SMR" id="A5DB51"/>
<dbReference type="FunCoup" id="A5DB51">
    <property type="interactions" value="173"/>
</dbReference>
<dbReference type="STRING" id="294746.A5DB51"/>
<dbReference type="GeneID" id="5129626"/>
<dbReference type="KEGG" id="pgu:PGUG_00506"/>
<dbReference type="eggNOG" id="KOG3310">
    <property type="taxonomic scope" value="Eukaryota"/>
</dbReference>
<dbReference type="HOGENOM" id="CLU_034388_1_1_1"/>
<dbReference type="InParanoid" id="A5DB51"/>
<dbReference type="OrthoDB" id="10258924at2759"/>
<dbReference type="UniPathway" id="UPA00275">
    <property type="reaction ID" value="UER00405"/>
</dbReference>
<dbReference type="Proteomes" id="UP000001997">
    <property type="component" value="Unassembled WGS sequence"/>
</dbReference>
<dbReference type="GO" id="GO:0004746">
    <property type="term" value="F:riboflavin synthase activity"/>
    <property type="evidence" value="ECO:0007669"/>
    <property type="project" value="UniProtKB-EC"/>
</dbReference>
<dbReference type="GO" id="GO:0009231">
    <property type="term" value="P:riboflavin biosynthetic process"/>
    <property type="evidence" value="ECO:0007669"/>
    <property type="project" value="UniProtKB-UniPathway"/>
</dbReference>
<dbReference type="CDD" id="cd00402">
    <property type="entry name" value="Riboflavin_synthase_like"/>
    <property type="match status" value="1"/>
</dbReference>
<dbReference type="FunFam" id="2.40.30.20:FF:000004">
    <property type="entry name" value="Riboflavin synthase, alpha subunit"/>
    <property type="match status" value="1"/>
</dbReference>
<dbReference type="FunFam" id="2.40.30.20:FF:000006">
    <property type="entry name" value="Riboflavin synthase, alpha subunit"/>
    <property type="match status" value="1"/>
</dbReference>
<dbReference type="Gene3D" id="2.40.30.20">
    <property type="match status" value="2"/>
</dbReference>
<dbReference type="InterPro" id="IPR023366">
    <property type="entry name" value="ATP_synth_asu-like_sf"/>
</dbReference>
<dbReference type="InterPro" id="IPR001783">
    <property type="entry name" value="Lumazine-bd"/>
</dbReference>
<dbReference type="InterPro" id="IPR026017">
    <property type="entry name" value="Lumazine-bd_dom"/>
</dbReference>
<dbReference type="InterPro" id="IPR017938">
    <property type="entry name" value="Riboflavin_synthase-like_b-brl"/>
</dbReference>
<dbReference type="NCBIfam" id="NF006767">
    <property type="entry name" value="PRK09289.1"/>
    <property type="match status" value="1"/>
</dbReference>
<dbReference type="NCBIfam" id="TIGR00187">
    <property type="entry name" value="ribE"/>
    <property type="match status" value="1"/>
</dbReference>
<dbReference type="PANTHER" id="PTHR21098:SF0">
    <property type="entry name" value="RIBOFLAVIN SYNTHASE"/>
    <property type="match status" value="1"/>
</dbReference>
<dbReference type="PANTHER" id="PTHR21098">
    <property type="entry name" value="RIBOFLAVIN SYNTHASE ALPHA CHAIN"/>
    <property type="match status" value="1"/>
</dbReference>
<dbReference type="Pfam" id="PF00677">
    <property type="entry name" value="Lum_binding"/>
    <property type="match status" value="2"/>
</dbReference>
<dbReference type="PIRSF" id="PIRSF000498">
    <property type="entry name" value="Riboflavin_syn_A"/>
    <property type="match status" value="1"/>
</dbReference>
<dbReference type="SUPFAM" id="SSF63380">
    <property type="entry name" value="Riboflavin synthase domain-like"/>
    <property type="match status" value="2"/>
</dbReference>
<dbReference type="PROSITE" id="PS51177">
    <property type="entry name" value="LUMAZINE_BIND"/>
    <property type="match status" value="2"/>
</dbReference>
<reference key="1">
    <citation type="journal article" date="2005" name="FEMS Yeast Res.">
        <title>Positive selection of mutants defective in transcriptional repression of riboflavin synthesis by iron in the flavinogenic yeast Pichia guilliermondii.</title>
        <authorList>
            <person name="Boretsky Y.R."/>
            <person name="Kapustyak K.Y."/>
            <person name="Fayura L.R."/>
            <person name="Stasyk O.V."/>
            <person name="Stenchuk M.M."/>
            <person name="Bobak Y.P."/>
            <person name="Drobot L.B."/>
            <person name="Sibirny A.A."/>
        </authorList>
    </citation>
    <scope>NUCLEOTIDE SEQUENCE [GENOMIC DNA]</scope>
    <scope>INDUCTION</scope>
</reference>
<reference key="2">
    <citation type="journal article" date="2009" name="Nature">
        <title>Evolution of pathogenicity and sexual reproduction in eight Candida genomes.</title>
        <authorList>
            <person name="Butler G."/>
            <person name="Rasmussen M.D."/>
            <person name="Lin M.F."/>
            <person name="Santos M.A.S."/>
            <person name="Sakthikumar S."/>
            <person name="Munro C.A."/>
            <person name="Rheinbay E."/>
            <person name="Grabherr M."/>
            <person name="Forche A."/>
            <person name="Reedy J.L."/>
            <person name="Agrafioti I."/>
            <person name="Arnaud M.B."/>
            <person name="Bates S."/>
            <person name="Brown A.J.P."/>
            <person name="Brunke S."/>
            <person name="Costanzo M.C."/>
            <person name="Fitzpatrick D.A."/>
            <person name="de Groot P.W.J."/>
            <person name="Harris D."/>
            <person name="Hoyer L.L."/>
            <person name="Hube B."/>
            <person name="Klis F.M."/>
            <person name="Kodira C."/>
            <person name="Lennard N."/>
            <person name="Logue M.E."/>
            <person name="Martin R."/>
            <person name="Neiman A.M."/>
            <person name="Nikolaou E."/>
            <person name="Quail M.A."/>
            <person name="Quinn J."/>
            <person name="Santos M.C."/>
            <person name="Schmitzberger F.F."/>
            <person name="Sherlock G."/>
            <person name="Shah P."/>
            <person name="Silverstein K.A.T."/>
            <person name="Skrzypek M.S."/>
            <person name="Soll D."/>
            <person name="Staggs R."/>
            <person name="Stansfield I."/>
            <person name="Stumpf M.P.H."/>
            <person name="Sudbery P.E."/>
            <person name="Srikantha T."/>
            <person name="Zeng Q."/>
            <person name="Berman J."/>
            <person name="Berriman M."/>
            <person name="Heitman J."/>
            <person name="Gow N.A.R."/>
            <person name="Lorenz M.C."/>
            <person name="Birren B.W."/>
            <person name="Kellis M."/>
            <person name="Cuomo C.A."/>
        </authorList>
    </citation>
    <scope>NUCLEOTIDE SEQUENCE [LARGE SCALE GENOMIC DNA]</scope>
    <source>
        <strain>ATCC 6260 / CBS 566 / DSM 6381 / JCM 1539 / NBRC 10279 / NRRL Y-324</strain>
    </source>
</reference>
<gene>
    <name type="primary">RIB5</name>
    <name type="synonym">RIB7</name>
    <name type="ORF">PGUG_00506</name>
</gene>
<feature type="chain" id="PRO_0000295039" description="Riboflavin synthase">
    <location>
        <begin position="1"/>
        <end position="239"/>
    </location>
</feature>
<feature type="repeat" description="Lumazine-binding 1">
    <location>
        <begin position="1"/>
        <end position="105"/>
    </location>
</feature>
<feature type="repeat" description="Lumazine-binding 2">
    <location>
        <begin position="106"/>
        <end position="205"/>
    </location>
</feature>
<feature type="binding site" evidence="3">
    <location>
        <begin position="4"/>
        <end position="6"/>
    </location>
    <ligand>
        <name>2,4-dihydroxypteridine</name>
        <dbReference type="ChEBI" id="CHEBI:16489"/>
        <label>1</label>
    </ligand>
</feature>
<feature type="binding site" evidence="3">
    <location>
        <begin position="54"/>
        <end position="56"/>
    </location>
    <ligand>
        <name>2,4-dihydroxypteridine</name>
        <dbReference type="ChEBI" id="CHEBI:16489"/>
        <label>2</label>
        <note>ligand shared between two trimeric partners</note>
    </ligand>
</feature>
<feature type="binding site" evidence="2">
    <location>
        <begin position="70"/>
        <end position="75"/>
    </location>
    <ligand>
        <name>2,4-dihydroxypteridine</name>
        <dbReference type="ChEBI" id="CHEBI:16489"/>
        <label>2</label>
        <note>ligand shared between two trimeric partners</note>
    </ligand>
</feature>
<feature type="binding site" evidence="3">
    <location>
        <begin position="109"/>
        <end position="111"/>
    </location>
    <ligand>
        <name>2,4-dihydroxypteridine</name>
        <dbReference type="ChEBI" id="CHEBI:16489"/>
        <label>2</label>
        <note>ligand shared between two trimeric partners</note>
    </ligand>
</feature>
<feature type="binding site" description="in other chain" evidence="3">
    <location>
        <position position="145"/>
    </location>
    <ligand>
        <name>2,4-dihydroxypteridine</name>
        <dbReference type="ChEBI" id="CHEBI:16489"/>
        <label>2</label>
        <note>ligand shared between two trimeric partners</note>
    </ligand>
</feature>
<feature type="binding site" evidence="3">
    <location>
        <begin position="154"/>
        <end position="156"/>
    </location>
    <ligand>
        <name>2,4-dihydroxypteridine</name>
        <dbReference type="ChEBI" id="CHEBI:16489"/>
        <label>1</label>
    </ligand>
</feature>
<feature type="binding site" evidence="3">
    <location>
        <begin position="170"/>
        <end position="175"/>
    </location>
    <ligand>
        <name>2,4-dihydroxypteridine</name>
        <dbReference type="ChEBI" id="CHEBI:16489"/>
        <label>1</label>
    </ligand>
</feature>
<organism>
    <name type="scientific">Meyerozyma guilliermondii (strain ATCC 6260 / CBS 566 / DSM 6381 / JCM 1539 / NBRC 10279 / NRRL Y-324)</name>
    <name type="common">Yeast</name>
    <name type="synonym">Candida guilliermondii</name>
    <dbReference type="NCBI Taxonomy" id="294746"/>
    <lineage>
        <taxon>Eukaryota</taxon>
        <taxon>Fungi</taxon>
        <taxon>Dikarya</taxon>
        <taxon>Ascomycota</taxon>
        <taxon>Saccharomycotina</taxon>
        <taxon>Pichiomycetes</taxon>
        <taxon>Debaryomycetaceae</taxon>
        <taxon>Meyerozyma</taxon>
    </lineage>
</organism>
<comment type="function">
    <text evidence="1">Catalyzes the dismutation of two molecules of 6,7-dimethyl-8-ribityllumazine, resulting in the formation of riboflavin and 5-amino-6-(D-ribitylamino)uracil.</text>
</comment>
<comment type="catalytic activity">
    <reaction>
        <text>2 6,7-dimethyl-8-(1-D-ribityl)lumazine + H(+) = 5-amino-6-(D-ribitylamino)uracil + riboflavin</text>
        <dbReference type="Rhea" id="RHEA:20772"/>
        <dbReference type="ChEBI" id="CHEBI:15378"/>
        <dbReference type="ChEBI" id="CHEBI:15934"/>
        <dbReference type="ChEBI" id="CHEBI:57986"/>
        <dbReference type="ChEBI" id="CHEBI:58201"/>
        <dbReference type="EC" id="2.5.1.9"/>
    </reaction>
</comment>
<comment type="pathway">
    <text>Cofactor biosynthesis; riboflavin biosynthesis; riboflavin from 2-hydroxy-3-oxobutyl phosphate and 5-amino-6-(D-ribitylamino)uracil: step 2/2.</text>
</comment>
<comment type="subunit">
    <text evidence="4">Homotrimer.</text>
</comment>
<comment type="induction">
    <text evidence="5">Repressed by iron.</text>
</comment>
<comment type="sequence caution" evidence="6">
    <conflict type="erroneous initiation">
        <sequence resource="EMBL-CDS" id="EDK36408"/>
    </conflict>
</comment>